<name>PPAL_SCHPO</name>
<accession>P41893</accession>
<accession>Q9UTQ3</accession>
<accession>Q9UUG7</accession>
<organism>
    <name type="scientific">Schizosaccharomyces pombe (strain 972 / ATCC 24843)</name>
    <name type="common">Fission yeast</name>
    <dbReference type="NCBI Taxonomy" id="284812"/>
    <lineage>
        <taxon>Eukaryota</taxon>
        <taxon>Fungi</taxon>
        <taxon>Dikarya</taxon>
        <taxon>Ascomycota</taxon>
        <taxon>Taphrinomycotina</taxon>
        <taxon>Schizosaccharomycetes</taxon>
        <taxon>Schizosaccharomycetales</taxon>
        <taxon>Schizosaccharomycetaceae</taxon>
        <taxon>Schizosaccharomyces</taxon>
    </lineage>
</organism>
<keyword id="KW-0963">Cytoplasm</keyword>
<keyword id="KW-0378">Hydrolase</keyword>
<keyword id="KW-0904">Protein phosphatase</keyword>
<keyword id="KW-1185">Reference proteome</keyword>
<feature type="chain" id="PRO_0000046564" description="Low molecular weight phosphotyrosine protein phosphatase">
    <location>
        <begin position="1"/>
        <end position="156"/>
    </location>
</feature>
<feature type="active site" description="Nucleophile" evidence="1">
    <location>
        <position position="11"/>
    </location>
</feature>
<feature type="active site" evidence="1">
    <location>
        <position position="17"/>
    </location>
</feature>
<feature type="active site" description="Proton donor" evidence="1">
    <location>
        <position position="128"/>
    </location>
</feature>
<reference key="1">
    <citation type="journal article" date="1994" name="J. Biol. Chem.">
        <title>Low molecular weight protein-tyrosine phosphatases are highly conserved between fission yeast and man.</title>
        <authorList>
            <person name="Mondesert O."/>
            <person name="Moreno S."/>
            <person name="Russell P."/>
        </authorList>
    </citation>
    <scope>NUCLEOTIDE SEQUENCE [MRNA]</scope>
    <source>
        <strain>972 / ATCC 24843</strain>
    </source>
</reference>
<reference key="2">
    <citation type="journal article" date="2002" name="Nature">
        <title>The genome sequence of Schizosaccharomyces pombe.</title>
        <authorList>
            <person name="Wood V."/>
            <person name="Gwilliam R."/>
            <person name="Rajandream M.A."/>
            <person name="Lyne M.H."/>
            <person name="Lyne R."/>
            <person name="Stewart A."/>
            <person name="Sgouros J.G."/>
            <person name="Peat N."/>
            <person name="Hayles J."/>
            <person name="Baker S.G."/>
            <person name="Basham D."/>
            <person name="Bowman S."/>
            <person name="Brooks K."/>
            <person name="Brown D."/>
            <person name="Brown S."/>
            <person name="Chillingworth T."/>
            <person name="Churcher C.M."/>
            <person name="Collins M."/>
            <person name="Connor R."/>
            <person name="Cronin A."/>
            <person name="Davis P."/>
            <person name="Feltwell T."/>
            <person name="Fraser A."/>
            <person name="Gentles S."/>
            <person name="Goble A."/>
            <person name="Hamlin N."/>
            <person name="Harris D.E."/>
            <person name="Hidalgo J."/>
            <person name="Hodgson G."/>
            <person name="Holroyd S."/>
            <person name="Hornsby T."/>
            <person name="Howarth S."/>
            <person name="Huckle E.J."/>
            <person name="Hunt S."/>
            <person name="Jagels K."/>
            <person name="James K.D."/>
            <person name="Jones L."/>
            <person name="Jones M."/>
            <person name="Leather S."/>
            <person name="McDonald S."/>
            <person name="McLean J."/>
            <person name="Mooney P."/>
            <person name="Moule S."/>
            <person name="Mungall K.L."/>
            <person name="Murphy L.D."/>
            <person name="Niblett D."/>
            <person name="Odell C."/>
            <person name="Oliver K."/>
            <person name="O'Neil S."/>
            <person name="Pearson D."/>
            <person name="Quail M.A."/>
            <person name="Rabbinowitsch E."/>
            <person name="Rutherford K.M."/>
            <person name="Rutter S."/>
            <person name="Saunders D."/>
            <person name="Seeger K."/>
            <person name="Sharp S."/>
            <person name="Skelton J."/>
            <person name="Simmonds M.N."/>
            <person name="Squares R."/>
            <person name="Squares S."/>
            <person name="Stevens K."/>
            <person name="Taylor K."/>
            <person name="Taylor R.G."/>
            <person name="Tivey A."/>
            <person name="Walsh S.V."/>
            <person name="Warren T."/>
            <person name="Whitehead S."/>
            <person name="Woodward J.R."/>
            <person name="Volckaert G."/>
            <person name="Aert R."/>
            <person name="Robben J."/>
            <person name="Grymonprez B."/>
            <person name="Weltjens I."/>
            <person name="Vanstreels E."/>
            <person name="Rieger M."/>
            <person name="Schaefer M."/>
            <person name="Mueller-Auer S."/>
            <person name="Gabel C."/>
            <person name="Fuchs M."/>
            <person name="Duesterhoeft A."/>
            <person name="Fritzc C."/>
            <person name="Holzer E."/>
            <person name="Moestl D."/>
            <person name="Hilbert H."/>
            <person name="Borzym K."/>
            <person name="Langer I."/>
            <person name="Beck A."/>
            <person name="Lehrach H."/>
            <person name="Reinhardt R."/>
            <person name="Pohl T.M."/>
            <person name="Eger P."/>
            <person name="Zimmermann W."/>
            <person name="Wedler H."/>
            <person name="Wambutt R."/>
            <person name="Purnelle B."/>
            <person name="Goffeau A."/>
            <person name="Cadieu E."/>
            <person name="Dreano S."/>
            <person name="Gloux S."/>
            <person name="Lelaure V."/>
            <person name="Mottier S."/>
            <person name="Galibert F."/>
            <person name="Aves S.J."/>
            <person name="Xiang Z."/>
            <person name="Hunt C."/>
            <person name="Moore K."/>
            <person name="Hurst S.M."/>
            <person name="Lucas M."/>
            <person name="Rochet M."/>
            <person name="Gaillardin C."/>
            <person name="Tallada V.A."/>
            <person name="Garzon A."/>
            <person name="Thode G."/>
            <person name="Daga R.R."/>
            <person name="Cruzado L."/>
            <person name="Jimenez J."/>
            <person name="Sanchez M."/>
            <person name="del Rey F."/>
            <person name="Benito J."/>
            <person name="Dominguez A."/>
            <person name="Revuelta J.L."/>
            <person name="Moreno S."/>
            <person name="Armstrong J."/>
            <person name="Forsburg S.L."/>
            <person name="Cerutti L."/>
            <person name="Lowe T."/>
            <person name="McCombie W.R."/>
            <person name="Paulsen I."/>
            <person name="Potashkin J."/>
            <person name="Shpakovski G.V."/>
            <person name="Ussery D."/>
            <person name="Barrell B.G."/>
            <person name="Nurse P."/>
        </authorList>
    </citation>
    <scope>NUCLEOTIDE SEQUENCE [LARGE SCALE GENOMIC DNA]</scope>
    <source>
        <strain>972 / ATCC 24843</strain>
    </source>
</reference>
<gene>
    <name type="primary">stp1</name>
    <name type="ORF">SPAC1071.12c</name>
    <name type="ORF">SPAC926.01c</name>
</gene>
<dbReference type="EC" id="3.1.3.48"/>
<dbReference type="EC" id="3.1.3.2"/>
<dbReference type="EMBL" id="L33929">
    <property type="protein sequence ID" value="AAA61930.1"/>
    <property type="molecule type" value="mRNA"/>
</dbReference>
<dbReference type="EMBL" id="CU329670">
    <property type="protein sequence ID" value="CAB59888.2"/>
    <property type="molecule type" value="Genomic_DNA"/>
</dbReference>
<dbReference type="PIR" id="A55446">
    <property type="entry name" value="A55446"/>
</dbReference>
<dbReference type="RefSeq" id="XP_001713094.1">
    <property type="nucleotide sequence ID" value="XM_001713042.2"/>
</dbReference>
<dbReference type="SMR" id="P41893"/>
<dbReference type="BioGRID" id="280509">
    <property type="interactions" value="12"/>
</dbReference>
<dbReference type="FunCoup" id="P41893">
    <property type="interactions" value="275"/>
</dbReference>
<dbReference type="STRING" id="284812.P41893"/>
<dbReference type="iPTMnet" id="P41893"/>
<dbReference type="PaxDb" id="4896-SPAC1071.12c.1"/>
<dbReference type="EnsemblFungi" id="SPAC1071.12c.1">
    <property type="protein sequence ID" value="SPAC1071.12c.1:pep"/>
    <property type="gene ID" value="SPAC1071.12c"/>
</dbReference>
<dbReference type="PomBase" id="SPAC1071.12c">
    <property type="gene designation" value="stp1"/>
</dbReference>
<dbReference type="VEuPathDB" id="FungiDB:SPAC1071.12c"/>
<dbReference type="eggNOG" id="KOG3217">
    <property type="taxonomic scope" value="Eukaryota"/>
</dbReference>
<dbReference type="HOGENOM" id="CLU_071415_2_0_1"/>
<dbReference type="InParanoid" id="P41893"/>
<dbReference type="OMA" id="VCHGNIC"/>
<dbReference type="PhylomeDB" id="P41893"/>
<dbReference type="BRENDA" id="3.1.3.48">
    <property type="organism ID" value="5613"/>
</dbReference>
<dbReference type="PRO" id="PR:P41893"/>
<dbReference type="Proteomes" id="UP000002485">
    <property type="component" value="Chromosome I"/>
</dbReference>
<dbReference type="GO" id="GO:0005829">
    <property type="term" value="C:cytosol"/>
    <property type="evidence" value="ECO:0007005"/>
    <property type="project" value="PomBase"/>
</dbReference>
<dbReference type="GO" id="GO:0005634">
    <property type="term" value="C:nucleus"/>
    <property type="evidence" value="ECO:0007005"/>
    <property type="project" value="PomBase"/>
</dbReference>
<dbReference type="GO" id="GO:0003993">
    <property type="term" value="F:acid phosphatase activity"/>
    <property type="evidence" value="ECO:0007669"/>
    <property type="project" value="UniProtKB-EC"/>
</dbReference>
<dbReference type="GO" id="GO:0004726">
    <property type="term" value="F:non-membrane spanning protein tyrosine phosphatase activity"/>
    <property type="evidence" value="ECO:0000314"/>
    <property type="project" value="PomBase"/>
</dbReference>
<dbReference type="GO" id="GO:0004725">
    <property type="term" value="F:protein tyrosine phosphatase activity"/>
    <property type="evidence" value="ECO:0000314"/>
    <property type="project" value="PomBase"/>
</dbReference>
<dbReference type="GO" id="GO:0023052">
    <property type="term" value="P:signaling"/>
    <property type="evidence" value="ECO:0000303"/>
    <property type="project" value="PomBase"/>
</dbReference>
<dbReference type="CDD" id="cd16343">
    <property type="entry name" value="LMWPTP"/>
    <property type="match status" value="1"/>
</dbReference>
<dbReference type="FunFam" id="3.40.50.2300:FF:000105">
    <property type="entry name" value="Low molecular weight phosphotyrosine protein"/>
    <property type="match status" value="1"/>
</dbReference>
<dbReference type="Gene3D" id="3.40.50.2300">
    <property type="match status" value="1"/>
</dbReference>
<dbReference type="InterPro" id="IPR050438">
    <property type="entry name" value="LMW_PTPase"/>
</dbReference>
<dbReference type="InterPro" id="IPR023485">
    <property type="entry name" value="Ptyr_pPase"/>
</dbReference>
<dbReference type="InterPro" id="IPR036196">
    <property type="entry name" value="Ptyr_pPase_sf"/>
</dbReference>
<dbReference type="InterPro" id="IPR002115">
    <property type="entry name" value="Tyr_Pase_low_mol_wt_mml"/>
</dbReference>
<dbReference type="InterPro" id="IPR017867">
    <property type="entry name" value="Tyr_phospatase_low_mol_wt"/>
</dbReference>
<dbReference type="PANTHER" id="PTHR11717:SF7">
    <property type="entry name" value="LOW MOLECULAR WEIGHT PHOSPHOTYROSINE PROTEIN PHOSPHATASE"/>
    <property type="match status" value="1"/>
</dbReference>
<dbReference type="PANTHER" id="PTHR11717">
    <property type="entry name" value="LOW MOLECULAR WEIGHT PROTEIN TYROSINE PHOSPHATASE"/>
    <property type="match status" value="1"/>
</dbReference>
<dbReference type="Pfam" id="PF01451">
    <property type="entry name" value="LMWPc"/>
    <property type="match status" value="1"/>
</dbReference>
<dbReference type="PRINTS" id="PR00719">
    <property type="entry name" value="LMWPTPASE"/>
</dbReference>
<dbReference type="PRINTS" id="PR00720">
    <property type="entry name" value="MAMMALPTPASE"/>
</dbReference>
<dbReference type="SMART" id="SM00226">
    <property type="entry name" value="LMWPc"/>
    <property type="match status" value="1"/>
</dbReference>
<dbReference type="SUPFAM" id="SSF52788">
    <property type="entry name" value="Phosphotyrosine protein phosphatases I"/>
    <property type="match status" value="1"/>
</dbReference>
<protein>
    <recommendedName>
        <fullName>Low molecular weight phosphotyrosine protein phosphatase</fullName>
        <ecNumber>3.1.3.48</ecNumber>
    </recommendedName>
    <alternativeName>
        <fullName>Low molecular weight cytosolic acid phosphatase</fullName>
        <ecNumber>3.1.3.2</ecNumber>
    </alternativeName>
    <alternativeName>
        <fullName>PTPase</fullName>
    </alternativeName>
    <alternativeName>
        <fullName>Small tyrosine phosphatase</fullName>
    </alternativeName>
</protein>
<comment type="function">
    <text>May contribute to dephosphorylation of 'Tyr-15' of cdc2.</text>
</comment>
<comment type="catalytic activity">
    <reaction>
        <text>O-phospho-L-tyrosyl-[protein] + H2O = L-tyrosyl-[protein] + phosphate</text>
        <dbReference type="Rhea" id="RHEA:10684"/>
        <dbReference type="Rhea" id="RHEA-COMP:10136"/>
        <dbReference type="Rhea" id="RHEA-COMP:20101"/>
        <dbReference type="ChEBI" id="CHEBI:15377"/>
        <dbReference type="ChEBI" id="CHEBI:43474"/>
        <dbReference type="ChEBI" id="CHEBI:46858"/>
        <dbReference type="ChEBI" id="CHEBI:61978"/>
        <dbReference type="EC" id="3.1.3.48"/>
    </reaction>
</comment>
<comment type="catalytic activity">
    <reaction>
        <text>a phosphate monoester + H2O = an alcohol + phosphate</text>
        <dbReference type="Rhea" id="RHEA:15017"/>
        <dbReference type="ChEBI" id="CHEBI:15377"/>
        <dbReference type="ChEBI" id="CHEBI:30879"/>
        <dbReference type="ChEBI" id="CHEBI:43474"/>
        <dbReference type="ChEBI" id="CHEBI:67140"/>
        <dbReference type="EC" id="3.1.3.2"/>
    </reaction>
</comment>
<comment type="subcellular location">
    <subcellularLocation>
        <location>Cytoplasm</location>
    </subcellularLocation>
</comment>
<comment type="similarity">
    <text evidence="2">Belongs to the low molecular weight phosphotyrosine protein phosphatase family.</text>
</comment>
<proteinExistence type="evidence at transcript level"/>
<sequence length="156" mass="17391">MTKNIQVLFVCLGNICRSPMAEAVFRNEVEKAGLEARFDTIDSCGTGAWHVGNRPDPRTLEVLKKNGIHTKHLARKLSTSDFKNFDYIFAMDSSNLRNINRVKPQGSRAKVMLFGEYASPGVSKIVDDPYYGGSDGFGDCYIQLVDFSQNFLKSIA</sequence>
<evidence type="ECO:0000250" key="1">
    <source>
        <dbReference type="UniProtKB" id="P11064"/>
    </source>
</evidence>
<evidence type="ECO:0000305" key="2"/>